<evidence type="ECO:0000250" key="1"/>
<evidence type="ECO:0000255" key="2"/>
<evidence type="ECO:0000305" key="3"/>
<keyword id="KW-0349">Heme</keyword>
<keyword id="KW-0408">Iron</keyword>
<keyword id="KW-0472">Membrane</keyword>
<keyword id="KW-0479">Metal-binding</keyword>
<keyword id="KW-0503">Monooxygenase</keyword>
<keyword id="KW-0560">Oxidoreductase</keyword>
<keyword id="KW-1185">Reference proteome</keyword>
<keyword id="KW-0812">Transmembrane</keyword>
<keyword id="KW-1133">Transmembrane helix</keyword>
<feature type="chain" id="PRO_0000052107" description="Cytochrome P450 71B31">
    <location>
        <begin position="1"/>
        <end position="498"/>
    </location>
</feature>
<feature type="transmembrane region" description="Helical" evidence="2">
    <location>
        <begin position="3"/>
        <end position="23"/>
    </location>
</feature>
<feature type="binding site" description="axial binding residue" evidence="1">
    <location>
        <position position="441"/>
    </location>
    <ligand>
        <name>heme</name>
        <dbReference type="ChEBI" id="CHEBI:30413"/>
    </ligand>
    <ligandPart>
        <name>Fe</name>
        <dbReference type="ChEBI" id="CHEBI:18248"/>
    </ligandPart>
</feature>
<feature type="sequence conflict" description="In Ref. 3; AAL07133." evidence="3" ref="3">
    <original>F</original>
    <variation>L</variation>
    <location>
        <position position="215"/>
    </location>
</feature>
<dbReference type="EC" id="1.14.-.-"/>
<dbReference type="EMBL" id="AL132958">
    <property type="protein sequence ID" value="CAB64233.1"/>
    <property type="molecule type" value="Genomic_DNA"/>
</dbReference>
<dbReference type="EMBL" id="CP002686">
    <property type="protein sequence ID" value="AEE79065.1"/>
    <property type="molecule type" value="Genomic_DNA"/>
</dbReference>
<dbReference type="EMBL" id="AY056284">
    <property type="protein sequence ID" value="AAL07133.1"/>
    <property type="molecule type" value="mRNA"/>
</dbReference>
<dbReference type="PIR" id="T46176">
    <property type="entry name" value="T46176"/>
</dbReference>
<dbReference type="RefSeq" id="NP_190898.1">
    <property type="nucleotide sequence ID" value="NM_115190.1"/>
</dbReference>
<dbReference type="SMR" id="Q9SCN2"/>
<dbReference type="BioGRID" id="9814">
    <property type="interactions" value="1"/>
</dbReference>
<dbReference type="FunCoup" id="Q9SCN2">
    <property type="interactions" value="218"/>
</dbReference>
<dbReference type="IntAct" id="Q9SCN2">
    <property type="interactions" value="1"/>
</dbReference>
<dbReference type="STRING" id="3702.Q9SCN2"/>
<dbReference type="PaxDb" id="3702-AT3G53300.1"/>
<dbReference type="ProteomicsDB" id="240269"/>
<dbReference type="EnsemblPlants" id="AT3G53300.1">
    <property type="protein sequence ID" value="AT3G53300.1"/>
    <property type="gene ID" value="AT3G53300"/>
</dbReference>
<dbReference type="GeneID" id="824497"/>
<dbReference type="Gramene" id="AT3G53300.1">
    <property type="protein sequence ID" value="AT3G53300.1"/>
    <property type="gene ID" value="AT3G53300"/>
</dbReference>
<dbReference type="KEGG" id="ath:AT3G53300"/>
<dbReference type="Araport" id="AT3G53300"/>
<dbReference type="TAIR" id="AT3G53300">
    <property type="gene designation" value="CYP71B31"/>
</dbReference>
<dbReference type="eggNOG" id="KOG0156">
    <property type="taxonomic scope" value="Eukaryota"/>
</dbReference>
<dbReference type="HOGENOM" id="CLU_001570_4_1_1"/>
<dbReference type="InParanoid" id="Q9SCN2"/>
<dbReference type="OrthoDB" id="2789670at2759"/>
<dbReference type="PhylomeDB" id="Q9SCN2"/>
<dbReference type="BioCyc" id="ARA:AT3G53300-MONOMER"/>
<dbReference type="PRO" id="PR:Q9SCN2"/>
<dbReference type="Proteomes" id="UP000006548">
    <property type="component" value="Chromosome 3"/>
</dbReference>
<dbReference type="ExpressionAtlas" id="Q9SCN2">
    <property type="expression patterns" value="baseline and differential"/>
</dbReference>
<dbReference type="GO" id="GO:0005783">
    <property type="term" value="C:endoplasmic reticulum"/>
    <property type="evidence" value="ECO:0000314"/>
    <property type="project" value="TAIR"/>
</dbReference>
<dbReference type="GO" id="GO:0016020">
    <property type="term" value="C:membrane"/>
    <property type="evidence" value="ECO:0007669"/>
    <property type="project" value="UniProtKB-SubCell"/>
</dbReference>
<dbReference type="GO" id="GO:0020037">
    <property type="term" value="F:heme binding"/>
    <property type="evidence" value="ECO:0007669"/>
    <property type="project" value="InterPro"/>
</dbReference>
<dbReference type="GO" id="GO:0005506">
    <property type="term" value="F:iron ion binding"/>
    <property type="evidence" value="ECO:0007669"/>
    <property type="project" value="InterPro"/>
</dbReference>
<dbReference type="GO" id="GO:0004497">
    <property type="term" value="F:monooxygenase activity"/>
    <property type="evidence" value="ECO:0007669"/>
    <property type="project" value="UniProtKB-KW"/>
</dbReference>
<dbReference type="GO" id="GO:0016705">
    <property type="term" value="F:oxidoreductase activity, acting on paired donors, with incorporation or reduction of molecular oxygen"/>
    <property type="evidence" value="ECO:0007669"/>
    <property type="project" value="InterPro"/>
</dbReference>
<dbReference type="CDD" id="cd11072">
    <property type="entry name" value="CYP71-like"/>
    <property type="match status" value="1"/>
</dbReference>
<dbReference type="FunFam" id="1.10.630.10:FF:000011">
    <property type="entry name" value="Cytochrome P450 83B1"/>
    <property type="match status" value="1"/>
</dbReference>
<dbReference type="Gene3D" id="1.10.630.10">
    <property type="entry name" value="Cytochrome P450"/>
    <property type="match status" value="1"/>
</dbReference>
<dbReference type="InterPro" id="IPR001128">
    <property type="entry name" value="Cyt_P450"/>
</dbReference>
<dbReference type="InterPro" id="IPR017972">
    <property type="entry name" value="Cyt_P450_CS"/>
</dbReference>
<dbReference type="InterPro" id="IPR002401">
    <property type="entry name" value="Cyt_P450_E_grp-I"/>
</dbReference>
<dbReference type="InterPro" id="IPR036396">
    <property type="entry name" value="Cyt_P450_sf"/>
</dbReference>
<dbReference type="InterPro" id="IPR050193">
    <property type="entry name" value="Cytochrome_P450_71"/>
</dbReference>
<dbReference type="PANTHER" id="PTHR47956">
    <property type="entry name" value="CYTOCHROME P450 71B11-RELATED"/>
    <property type="match status" value="1"/>
</dbReference>
<dbReference type="PANTHER" id="PTHR47956:SF79">
    <property type="entry name" value="CYTOCHROME P450 71B31-RELATED"/>
    <property type="match status" value="1"/>
</dbReference>
<dbReference type="Pfam" id="PF00067">
    <property type="entry name" value="p450"/>
    <property type="match status" value="1"/>
</dbReference>
<dbReference type="PRINTS" id="PR00463">
    <property type="entry name" value="EP450I"/>
</dbReference>
<dbReference type="PRINTS" id="PR00385">
    <property type="entry name" value="P450"/>
</dbReference>
<dbReference type="SUPFAM" id="SSF48264">
    <property type="entry name" value="Cytochrome P450"/>
    <property type="match status" value="1"/>
</dbReference>
<dbReference type="PROSITE" id="PS00086">
    <property type="entry name" value="CYTOCHROME_P450"/>
    <property type="match status" value="1"/>
</dbReference>
<reference key="1">
    <citation type="journal article" date="2000" name="Nature">
        <title>Sequence and analysis of chromosome 3 of the plant Arabidopsis thaliana.</title>
        <authorList>
            <person name="Salanoubat M."/>
            <person name="Lemcke K."/>
            <person name="Rieger M."/>
            <person name="Ansorge W."/>
            <person name="Unseld M."/>
            <person name="Fartmann B."/>
            <person name="Valle G."/>
            <person name="Bloecker H."/>
            <person name="Perez-Alonso M."/>
            <person name="Obermaier B."/>
            <person name="Delseny M."/>
            <person name="Boutry M."/>
            <person name="Grivell L.A."/>
            <person name="Mache R."/>
            <person name="Puigdomenech P."/>
            <person name="De Simone V."/>
            <person name="Choisne N."/>
            <person name="Artiguenave F."/>
            <person name="Robert C."/>
            <person name="Brottier P."/>
            <person name="Wincker P."/>
            <person name="Cattolico L."/>
            <person name="Weissenbach J."/>
            <person name="Saurin W."/>
            <person name="Quetier F."/>
            <person name="Schaefer M."/>
            <person name="Mueller-Auer S."/>
            <person name="Gabel C."/>
            <person name="Fuchs M."/>
            <person name="Benes V."/>
            <person name="Wurmbach E."/>
            <person name="Drzonek H."/>
            <person name="Erfle H."/>
            <person name="Jordan N."/>
            <person name="Bangert S."/>
            <person name="Wiedelmann R."/>
            <person name="Kranz H."/>
            <person name="Voss H."/>
            <person name="Holland R."/>
            <person name="Brandt P."/>
            <person name="Nyakatura G."/>
            <person name="Vezzi A."/>
            <person name="D'Angelo M."/>
            <person name="Pallavicini A."/>
            <person name="Toppo S."/>
            <person name="Simionati B."/>
            <person name="Conrad A."/>
            <person name="Hornischer K."/>
            <person name="Kauer G."/>
            <person name="Loehnert T.-H."/>
            <person name="Nordsiek G."/>
            <person name="Reichelt J."/>
            <person name="Scharfe M."/>
            <person name="Schoen O."/>
            <person name="Bargues M."/>
            <person name="Terol J."/>
            <person name="Climent J."/>
            <person name="Navarro P."/>
            <person name="Collado C."/>
            <person name="Perez-Perez A."/>
            <person name="Ottenwaelder B."/>
            <person name="Duchemin D."/>
            <person name="Cooke R."/>
            <person name="Laudie M."/>
            <person name="Berger-Llauro C."/>
            <person name="Purnelle B."/>
            <person name="Masuy D."/>
            <person name="de Haan M."/>
            <person name="Maarse A.C."/>
            <person name="Alcaraz J.-P."/>
            <person name="Cottet A."/>
            <person name="Casacuberta E."/>
            <person name="Monfort A."/>
            <person name="Argiriou A."/>
            <person name="Flores M."/>
            <person name="Liguori R."/>
            <person name="Vitale D."/>
            <person name="Mannhaupt G."/>
            <person name="Haase D."/>
            <person name="Schoof H."/>
            <person name="Rudd S."/>
            <person name="Zaccaria P."/>
            <person name="Mewes H.-W."/>
            <person name="Mayer K.F.X."/>
            <person name="Kaul S."/>
            <person name="Town C.D."/>
            <person name="Koo H.L."/>
            <person name="Tallon L.J."/>
            <person name="Jenkins J."/>
            <person name="Rooney T."/>
            <person name="Rizzo M."/>
            <person name="Walts A."/>
            <person name="Utterback T."/>
            <person name="Fujii C.Y."/>
            <person name="Shea T.P."/>
            <person name="Creasy T.H."/>
            <person name="Haas B."/>
            <person name="Maiti R."/>
            <person name="Wu D."/>
            <person name="Peterson J."/>
            <person name="Van Aken S."/>
            <person name="Pai G."/>
            <person name="Militscher J."/>
            <person name="Sellers P."/>
            <person name="Gill J.E."/>
            <person name="Feldblyum T.V."/>
            <person name="Preuss D."/>
            <person name="Lin X."/>
            <person name="Nierman W.C."/>
            <person name="Salzberg S.L."/>
            <person name="White O."/>
            <person name="Venter J.C."/>
            <person name="Fraser C.M."/>
            <person name="Kaneko T."/>
            <person name="Nakamura Y."/>
            <person name="Sato S."/>
            <person name="Kato T."/>
            <person name="Asamizu E."/>
            <person name="Sasamoto S."/>
            <person name="Kimura T."/>
            <person name="Idesawa K."/>
            <person name="Kawashima K."/>
            <person name="Kishida Y."/>
            <person name="Kiyokawa C."/>
            <person name="Kohara M."/>
            <person name="Matsumoto M."/>
            <person name="Matsuno A."/>
            <person name="Muraki A."/>
            <person name="Nakayama S."/>
            <person name="Nakazaki N."/>
            <person name="Shinpo S."/>
            <person name="Takeuchi C."/>
            <person name="Wada T."/>
            <person name="Watanabe A."/>
            <person name="Yamada M."/>
            <person name="Yasuda M."/>
            <person name="Tabata S."/>
        </authorList>
    </citation>
    <scope>NUCLEOTIDE SEQUENCE [LARGE SCALE GENOMIC DNA]</scope>
    <source>
        <strain>cv. Columbia</strain>
    </source>
</reference>
<reference key="2">
    <citation type="journal article" date="2017" name="Plant J.">
        <title>Araport11: a complete reannotation of the Arabidopsis thaliana reference genome.</title>
        <authorList>
            <person name="Cheng C.Y."/>
            <person name="Krishnakumar V."/>
            <person name="Chan A.P."/>
            <person name="Thibaud-Nissen F."/>
            <person name="Schobel S."/>
            <person name="Town C.D."/>
        </authorList>
    </citation>
    <scope>GENOME REANNOTATION</scope>
    <source>
        <strain>cv. Columbia</strain>
    </source>
</reference>
<reference key="3">
    <citation type="journal article" date="2003" name="Science">
        <title>Empirical analysis of transcriptional activity in the Arabidopsis genome.</title>
        <authorList>
            <person name="Yamada K."/>
            <person name="Lim J."/>
            <person name="Dale J.M."/>
            <person name="Chen H."/>
            <person name="Shinn P."/>
            <person name="Palm C.J."/>
            <person name="Southwick A.M."/>
            <person name="Wu H.C."/>
            <person name="Kim C.J."/>
            <person name="Nguyen M."/>
            <person name="Pham P.K."/>
            <person name="Cheuk R.F."/>
            <person name="Karlin-Newmann G."/>
            <person name="Liu S.X."/>
            <person name="Lam B."/>
            <person name="Sakano H."/>
            <person name="Wu T."/>
            <person name="Yu G."/>
            <person name="Miranda M."/>
            <person name="Quach H.L."/>
            <person name="Tripp M."/>
            <person name="Chang C.H."/>
            <person name="Lee J.M."/>
            <person name="Toriumi M.J."/>
            <person name="Chan M.M."/>
            <person name="Tang C.C."/>
            <person name="Onodera C.S."/>
            <person name="Deng J.M."/>
            <person name="Akiyama K."/>
            <person name="Ansari Y."/>
            <person name="Arakawa T."/>
            <person name="Banh J."/>
            <person name="Banno F."/>
            <person name="Bowser L."/>
            <person name="Brooks S.Y."/>
            <person name="Carninci P."/>
            <person name="Chao Q."/>
            <person name="Choy N."/>
            <person name="Enju A."/>
            <person name="Goldsmith A.D."/>
            <person name="Gurjal M."/>
            <person name="Hansen N.F."/>
            <person name="Hayashizaki Y."/>
            <person name="Johnson-Hopson C."/>
            <person name="Hsuan V.W."/>
            <person name="Iida K."/>
            <person name="Karnes M."/>
            <person name="Khan S."/>
            <person name="Koesema E."/>
            <person name="Ishida J."/>
            <person name="Jiang P.X."/>
            <person name="Jones T."/>
            <person name="Kawai J."/>
            <person name="Kamiya A."/>
            <person name="Meyers C."/>
            <person name="Nakajima M."/>
            <person name="Narusaka M."/>
            <person name="Seki M."/>
            <person name="Sakurai T."/>
            <person name="Satou M."/>
            <person name="Tamse R."/>
            <person name="Vaysberg M."/>
            <person name="Wallender E.K."/>
            <person name="Wong C."/>
            <person name="Yamamura Y."/>
            <person name="Yuan S."/>
            <person name="Shinozaki K."/>
            <person name="Davis R.W."/>
            <person name="Theologis A."/>
            <person name="Ecker J.R."/>
        </authorList>
    </citation>
    <scope>NUCLEOTIDE SEQUENCE [LARGE SCALE MRNA]</scope>
    <source>
        <strain>cv. Columbia</strain>
    </source>
</reference>
<organism>
    <name type="scientific">Arabidopsis thaliana</name>
    <name type="common">Mouse-ear cress</name>
    <dbReference type="NCBI Taxonomy" id="3702"/>
    <lineage>
        <taxon>Eukaryota</taxon>
        <taxon>Viridiplantae</taxon>
        <taxon>Streptophyta</taxon>
        <taxon>Embryophyta</taxon>
        <taxon>Tracheophyta</taxon>
        <taxon>Spermatophyta</taxon>
        <taxon>Magnoliopsida</taxon>
        <taxon>eudicotyledons</taxon>
        <taxon>Gunneridae</taxon>
        <taxon>Pentapetalae</taxon>
        <taxon>rosids</taxon>
        <taxon>malvids</taxon>
        <taxon>Brassicales</taxon>
        <taxon>Brassicaceae</taxon>
        <taxon>Camelineae</taxon>
        <taxon>Arabidopsis</taxon>
    </lineage>
</organism>
<proteinExistence type="evidence at transcript level"/>
<accession>Q9SCN2</accession>
<accession>Q93ZS8</accession>
<comment type="cofactor">
    <cofactor evidence="1">
        <name>heme</name>
        <dbReference type="ChEBI" id="CHEBI:30413"/>
    </cofactor>
</comment>
<comment type="subcellular location">
    <subcellularLocation>
        <location evidence="3">Membrane</location>
        <topology evidence="3">Single-pass membrane protein</topology>
    </subcellularLocation>
</comment>
<comment type="similarity">
    <text evidence="3">Belongs to the cytochrome P450 family.</text>
</comment>
<protein>
    <recommendedName>
        <fullName>Cytochrome P450 71B31</fullName>
        <ecNumber>1.14.-.-</ecNumber>
    </recommendedName>
</protein>
<gene>
    <name type="primary">CYP71B31</name>
    <name type="ordered locus">At3g53300</name>
    <name type="ORF">T4D2.220</name>
</gene>
<sequence length="498" mass="57143">MSMFLGLLFLFPLFFILFKNLLPPRKKLPPGPTGLPLIGNLHQLGRLLHSSLHKLSLEHGPVMLVRWGVVPMAVFSSNEAAKEVLKTHDLETCNRPKLVANGLFTHGYKDIGFTQYGEEWREMKKFVGLELFSPKKHKSFRYIREEEGDLLVKKISNYAQTQTLVDLRKSLFSYTASIIFREAFGQNFRECDYINMDKLEELVQETETNVCSLAFTDFFPRGLGWLVDRISGQHSRMNIAFSKLTTFFEDVIDELLKTKQLDDHSDLVTAMLDVINRPRKFGSLKITYDHLIAMMSDVVLAGVNAGTVTMIWTMTELTRHPRVMKKLQEEIRATLGPNKERITEEDLEKVEYLNLVIKESFRLHPPAPLLLPRETMSDIEIQGYHIPKNAHVKINTYAIGRDPKRWTNPEEFNPERFLNTSINYKGQHYELLPFGAGRRNCPGMTLGITILELGLLNILYYFDWSLPSGMTIKDIDMEEDGALNIAKKVPLQLVPTLP</sequence>
<name>C71BU_ARATH</name>